<protein>
    <recommendedName>
        <fullName evidence="1">Protease HtpX homolog</fullName>
        <ecNumber evidence="1">3.4.24.-</ecNumber>
    </recommendedName>
</protein>
<dbReference type="EC" id="3.4.24.-" evidence="1"/>
<dbReference type="EMBL" id="CP000478">
    <property type="protein sequence ID" value="ABK16961.1"/>
    <property type="molecule type" value="Genomic_DNA"/>
</dbReference>
<dbReference type="RefSeq" id="WP_011698132.1">
    <property type="nucleotide sequence ID" value="NC_008554.1"/>
</dbReference>
<dbReference type="SMR" id="A0LHQ9"/>
<dbReference type="FunCoup" id="A0LHQ9">
    <property type="interactions" value="287"/>
</dbReference>
<dbReference type="STRING" id="335543.Sfum_1269"/>
<dbReference type="KEGG" id="sfu:Sfum_1269"/>
<dbReference type="eggNOG" id="COG0501">
    <property type="taxonomic scope" value="Bacteria"/>
</dbReference>
<dbReference type="HOGENOM" id="CLU_042266_3_0_7"/>
<dbReference type="InParanoid" id="A0LHQ9"/>
<dbReference type="OrthoDB" id="15218at2"/>
<dbReference type="Proteomes" id="UP000001784">
    <property type="component" value="Chromosome"/>
</dbReference>
<dbReference type="GO" id="GO:0005886">
    <property type="term" value="C:plasma membrane"/>
    <property type="evidence" value="ECO:0007669"/>
    <property type="project" value="UniProtKB-SubCell"/>
</dbReference>
<dbReference type="GO" id="GO:0004222">
    <property type="term" value="F:metalloendopeptidase activity"/>
    <property type="evidence" value="ECO:0007669"/>
    <property type="project" value="UniProtKB-UniRule"/>
</dbReference>
<dbReference type="GO" id="GO:0008270">
    <property type="term" value="F:zinc ion binding"/>
    <property type="evidence" value="ECO:0007669"/>
    <property type="project" value="UniProtKB-UniRule"/>
</dbReference>
<dbReference type="GO" id="GO:0006508">
    <property type="term" value="P:proteolysis"/>
    <property type="evidence" value="ECO:0007669"/>
    <property type="project" value="UniProtKB-KW"/>
</dbReference>
<dbReference type="CDD" id="cd07336">
    <property type="entry name" value="M48B_HtpX_like"/>
    <property type="match status" value="1"/>
</dbReference>
<dbReference type="Gene3D" id="3.30.2010.10">
    <property type="entry name" value="Metalloproteases ('zincins'), catalytic domain"/>
    <property type="match status" value="1"/>
</dbReference>
<dbReference type="HAMAP" id="MF_00188">
    <property type="entry name" value="Pept_M48_protease_HtpX"/>
    <property type="match status" value="1"/>
</dbReference>
<dbReference type="InterPro" id="IPR050083">
    <property type="entry name" value="HtpX_protease"/>
</dbReference>
<dbReference type="InterPro" id="IPR022919">
    <property type="entry name" value="Pept_M48_protease_HtpX"/>
</dbReference>
<dbReference type="InterPro" id="IPR001915">
    <property type="entry name" value="Peptidase_M48"/>
</dbReference>
<dbReference type="NCBIfam" id="NF002826">
    <property type="entry name" value="PRK03001.1"/>
    <property type="match status" value="1"/>
</dbReference>
<dbReference type="PANTHER" id="PTHR43221">
    <property type="entry name" value="PROTEASE HTPX"/>
    <property type="match status" value="1"/>
</dbReference>
<dbReference type="PANTHER" id="PTHR43221:SF1">
    <property type="entry name" value="PROTEASE HTPX"/>
    <property type="match status" value="1"/>
</dbReference>
<dbReference type="Pfam" id="PF01435">
    <property type="entry name" value="Peptidase_M48"/>
    <property type="match status" value="1"/>
</dbReference>
<sequence length="282" mass="30251">MGSRFRTTVLLAALTALIIWIGGAVGGSHGMMIAFVLALVMNVGSYWFSDKIVLAMYRAQPLSEADAPQIYRIVRELSASANLPMPRVYLIPESAPNAFATGRNPENAVIAVTEGLWRILTPDEIRGVLAHELAHVKNRDILVSSIAATLAGVVMILARMAQWGALFGGGRSSSDEDSGGGMLGLVVTAILAPIAAMLIQLAISRSREYLADETGAAFSHNPESLARALEKLAMASHQNPMEDASPSTAHLFIVNPLSGRSLANLFSTHPPIEERIRRLRSM</sequence>
<evidence type="ECO:0000255" key="1">
    <source>
        <dbReference type="HAMAP-Rule" id="MF_00188"/>
    </source>
</evidence>
<gene>
    <name evidence="1" type="primary">htpX</name>
    <name type="ordered locus">Sfum_1269</name>
</gene>
<organism>
    <name type="scientific">Syntrophobacter fumaroxidans (strain DSM 10017 / MPOB)</name>
    <dbReference type="NCBI Taxonomy" id="335543"/>
    <lineage>
        <taxon>Bacteria</taxon>
        <taxon>Pseudomonadati</taxon>
        <taxon>Thermodesulfobacteriota</taxon>
        <taxon>Syntrophobacteria</taxon>
        <taxon>Syntrophobacterales</taxon>
        <taxon>Syntrophobacteraceae</taxon>
        <taxon>Syntrophobacter</taxon>
    </lineage>
</organism>
<keyword id="KW-0997">Cell inner membrane</keyword>
<keyword id="KW-1003">Cell membrane</keyword>
<keyword id="KW-0378">Hydrolase</keyword>
<keyword id="KW-0472">Membrane</keyword>
<keyword id="KW-0479">Metal-binding</keyword>
<keyword id="KW-0482">Metalloprotease</keyword>
<keyword id="KW-0645">Protease</keyword>
<keyword id="KW-1185">Reference proteome</keyword>
<keyword id="KW-0812">Transmembrane</keyword>
<keyword id="KW-1133">Transmembrane helix</keyword>
<keyword id="KW-0862">Zinc</keyword>
<accession>A0LHQ9</accession>
<name>HTPX_SYNFM</name>
<proteinExistence type="inferred from homology"/>
<reference key="1">
    <citation type="submission" date="2006-10" db="EMBL/GenBank/DDBJ databases">
        <title>Complete sequence of Syntrophobacter fumaroxidans MPOB.</title>
        <authorList>
            <consortium name="US DOE Joint Genome Institute"/>
            <person name="Copeland A."/>
            <person name="Lucas S."/>
            <person name="Lapidus A."/>
            <person name="Barry K."/>
            <person name="Detter J.C."/>
            <person name="Glavina del Rio T."/>
            <person name="Hammon N."/>
            <person name="Israni S."/>
            <person name="Pitluck S."/>
            <person name="Goltsman E.G."/>
            <person name="Martinez M."/>
            <person name="Schmutz J."/>
            <person name="Larimer F."/>
            <person name="Land M."/>
            <person name="Hauser L."/>
            <person name="Kyrpides N."/>
            <person name="Kim E."/>
            <person name="Boone D.R."/>
            <person name="Brockman F."/>
            <person name="Culley D."/>
            <person name="Ferry J."/>
            <person name="Gunsalus R."/>
            <person name="McInerney M.J."/>
            <person name="Morrison M."/>
            <person name="Plugge C."/>
            <person name="Rohlin L."/>
            <person name="Scholten J."/>
            <person name="Sieber J."/>
            <person name="Stams A.J.M."/>
            <person name="Worm P."/>
            <person name="Henstra A.M."/>
            <person name="Richardson P."/>
        </authorList>
    </citation>
    <scope>NUCLEOTIDE SEQUENCE [LARGE SCALE GENOMIC DNA]</scope>
    <source>
        <strain>DSM 10017 / MPOB</strain>
    </source>
</reference>
<feature type="chain" id="PRO_1000192752" description="Protease HtpX homolog">
    <location>
        <begin position="1"/>
        <end position="282"/>
    </location>
</feature>
<feature type="transmembrane region" description="Helical" evidence="1">
    <location>
        <begin position="7"/>
        <end position="26"/>
    </location>
</feature>
<feature type="transmembrane region" description="Helical" evidence="1">
    <location>
        <begin position="30"/>
        <end position="49"/>
    </location>
</feature>
<feature type="transmembrane region" description="Helical" evidence="1">
    <location>
        <begin position="141"/>
        <end position="161"/>
    </location>
</feature>
<feature type="transmembrane region" description="Helical" evidence="1">
    <location>
        <begin position="183"/>
        <end position="203"/>
    </location>
</feature>
<feature type="active site" evidence="1">
    <location>
        <position position="132"/>
    </location>
</feature>
<feature type="binding site" evidence="1">
    <location>
        <position position="131"/>
    </location>
    <ligand>
        <name>Zn(2+)</name>
        <dbReference type="ChEBI" id="CHEBI:29105"/>
        <note>catalytic</note>
    </ligand>
</feature>
<feature type="binding site" evidence="1">
    <location>
        <position position="135"/>
    </location>
    <ligand>
        <name>Zn(2+)</name>
        <dbReference type="ChEBI" id="CHEBI:29105"/>
        <note>catalytic</note>
    </ligand>
</feature>
<feature type="binding site" evidence="1">
    <location>
        <position position="208"/>
    </location>
    <ligand>
        <name>Zn(2+)</name>
        <dbReference type="ChEBI" id="CHEBI:29105"/>
        <note>catalytic</note>
    </ligand>
</feature>
<comment type="cofactor">
    <cofactor evidence="1">
        <name>Zn(2+)</name>
        <dbReference type="ChEBI" id="CHEBI:29105"/>
    </cofactor>
    <text evidence="1">Binds 1 zinc ion per subunit.</text>
</comment>
<comment type="subcellular location">
    <subcellularLocation>
        <location evidence="1">Cell inner membrane</location>
        <topology evidence="1">Multi-pass membrane protein</topology>
    </subcellularLocation>
</comment>
<comment type="similarity">
    <text evidence="1">Belongs to the peptidase M48B family.</text>
</comment>